<protein>
    <recommendedName>
        <fullName evidence="6">Evasin P1134</fullName>
    </recommendedName>
</protein>
<proteinExistence type="evidence at transcript level"/>
<accession>A0A0K8RAI0</accession>
<organism evidence="8">
    <name type="scientific">Ixodes ricinus</name>
    <name type="common">Common tick</name>
    <name type="synonym">Acarus ricinus</name>
    <dbReference type="NCBI Taxonomy" id="34613"/>
    <lineage>
        <taxon>Eukaryota</taxon>
        <taxon>Metazoa</taxon>
        <taxon>Ecdysozoa</taxon>
        <taxon>Arthropoda</taxon>
        <taxon>Chelicerata</taxon>
        <taxon>Arachnida</taxon>
        <taxon>Acari</taxon>
        <taxon>Parasitiformes</taxon>
        <taxon>Ixodida</taxon>
        <taxon>Ixodoidea</taxon>
        <taxon>Ixodidae</taxon>
        <taxon>Ixodinae</taxon>
        <taxon>Ixodes</taxon>
    </lineage>
</organism>
<reference evidence="8" key="1">
    <citation type="journal article" date="2013" name="FASEB J.">
        <title>De novo Ixodes ricinus salivary gland transcriptome analysis using two next-generation sequencing methodologies.</title>
        <authorList>
            <person name="Schwarz A."/>
            <person name="von Reumont B.M."/>
            <person name="Erhart J."/>
            <person name="Chagas A.C."/>
            <person name="Ribeiro J.M."/>
            <person name="Kotsyfakis M."/>
        </authorList>
    </citation>
    <scope>NUCLEOTIDE SEQUENCE [LARGE SCALE MRNA]</scope>
    <source>
        <tissue evidence="8">Salivary gland</tissue>
    </source>
</reference>
<reference evidence="7" key="2">
    <citation type="journal article" date="2019" name="J. Biol. Chem.">
        <title>A knottin scaffold directs the CXC-chemokine-binding specificity of tick evasins.</title>
        <authorList>
            <person name="Lee A.W."/>
            <person name="Deruaz M."/>
            <person name="Lynch C."/>
            <person name="Davies G."/>
            <person name="Singh K."/>
            <person name="Alenazi Y."/>
            <person name="Eaton J.R.O."/>
            <person name="Kawamura A."/>
            <person name="Shaw J."/>
            <person name="Proudfoot A.E.I."/>
            <person name="Dias J.M."/>
            <person name="Bhattacharya S."/>
        </authorList>
    </citation>
    <scope>FUNCTION</scope>
</reference>
<keyword id="KW-1015">Disulfide bond</keyword>
<keyword id="KW-0325">Glycoprotein</keyword>
<keyword id="KW-0964">Secreted</keyword>
<keyword id="KW-0732">Signal</keyword>
<feature type="signal peptide" evidence="2">
    <location>
        <begin position="1"/>
        <end position="31"/>
    </location>
</feature>
<feature type="chain" id="PRO_5005516561" description="Evasin P1134" evidence="2">
    <location>
        <begin position="32"/>
        <end position="135"/>
    </location>
</feature>
<feature type="region of interest" description="Disordered" evidence="4">
    <location>
        <begin position="88"/>
        <end position="112"/>
    </location>
</feature>
<feature type="glycosylation site" description="N-linked (GlcNAc...) asparagine" evidence="3">
    <location>
        <position position="44"/>
    </location>
</feature>
<feature type="disulfide bond" evidence="1">
    <location>
        <begin position="41"/>
        <end position="63"/>
    </location>
</feature>
<feature type="disulfide bond" evidence="1">
    <location>
        <begin position="45"/>
        <end position="65"/>
    </location>
</feature>
<feature type="disulfide bond" evidence="1">
    <location>
        <begin position="56"/>
        <end position="76"/>
    </location>
</feature>
<evidence type="ECO:0000250" key="1">
    <source>
        <dbReference type="UniProtKB" id="P0C8E8"/>
    </source>
</evidence>
<evidence type="ECO:0000255" key="2"/>
<evidence type="ECO:0000255" key="3">
    <source>
        <dbReference type="PROSITE-ProRule" id="PRU00498"/>
    </source>
</evidence>
<evidence type="ECO:0000256" key="4">
    <source>
        <dbReference type="SAM" id="MobiDB-lite"/>
    </source>
</evidence>
<evidence type="ECO:0000269" key="5">
    <source>
    </source>
</evidence>
<evidence type="ECO:0000303" key="6">
    <source>
    </source>
</evidence>
<evidence type="ECO:0000305" key="7"/>
<evidence type="ECO:0000312" key="8">
    <source>
        <dbReference type="EMBL" id="JAA68125.1"/>
    </source>
</evidence>
<dbReference type="EMBL" id="GADI01005683">
    <property type="protein sequence ID" value="JAA68125.1"/>
    <property type="molecule type" value="mRNA"/>
</dbReference>
<dbReference type="GO" id="GO:0005576">
    <property type="term" value="C:extracellular region"/>
    <property type="evidence" value="ECO:0007669"/>
    <property type="project" value="UniProtKB-SubCell"/>
</dbReference>
<dbReference type="GO" id="GO:0019958">
    <property type="term" value="F:C-X-C chemokine binding"/>
    <property type="evidence" value="ECO:0000314"/>
    <property type="project" value="UniProtKB"/>
</dbReference>
<sequence>MEVKTFAFLQIAVFIALGIQIFAAVTAAADANEEVFTVEYCGMNCTQKSDGTWTECSGKNKDCRCYHESDAREGLCLSTEYTDFSQFETPSNSDLEAATPRPRKTLYPVRNPHGPKTRGLGYDKRILRDRVKFLI</sequence>
<name>E1134_IXORI</name>
<comment type="function">
    <text evidence="5">Salivary chemokine-binding protein which binds to host chemokine CXCL1.</text>
</comment>
<comment type="subcellular location">
    <subcellularLocation>
        <location evidence="7">Secreted</location>
    </subcellularLocation>
</comment>